<proteinExistence type="inferred from homology"/>
<organism>
    <name type="scientific">Bacillus cereus (strain ATCC 14579 / DSM 31 / CCUG 7414 / JCM 2152 / NBRC 15305 / NCIMB 9373 / NCTC 2599 / NRRL B-3711)</name>
    <dbReference type="NCBI Taxonomy" id="226900"/>
    <lineage>
        <taxon>Bacteria</taxon>
        <taxon>Bacillati</taxon>
        <taxon>Bacillota</taxon>
        <taxon>Bacilli</taxon>
        <taxon>Bacillales</taxon>
        <taxon>Bacillaceae</taxon>
        <taxon>Bacillus</taxon>
        <taxon>Bacillus cereus group</taxon>
    </lineage>
</organism>
<accession>Q81I77</accession>
<comment type="subcellular location">
    <subcellularLocation>
        <location evidence="1">Cell membrane</location>
        <topology evidence="1">Multi-pass membrane protein</topology>
    </subcellularLocation>
</comment>
<comment type="similarity">
    <text evidence="1">Belongs to the UPF0295 family.</text>
</comment>
<comment type="sequence caution" evidence="2">
    <conflict type="erroneous initiation">
        <sequence resource="EMBL-CDS" id="AAP07558"/>
    </conflict>
</comment>
<protein>
    <recommendedName>
        <fullName evidence="1">UPF0295 protein BC_0520</fullName>
    </recommendedName>
</protein>
<name>Y520_BACCR</name>
<gene>
    <name type="ordered locus">BC_0520</name>
</gene>
<sequence length="118" mass="13557">MSIKYSNKINKIRTFALSLVFIGLFIAYLGVFFRENIIIMTTFMMVGFLAVIASTVVYFWIGMLSTKTIQIICPSCDKPTKMLGRVDACMHCNQPLTLDRDLEGKEFDEKYNKKSYKS</sequence>
<keyword id="KW-1003">Cell membrane</keyword>
<keyword id="KW-0472">Membrane</keyword>
<keyword id="KW-1185">Reference proteome</keyword>
<keyword id="KW-0812">Transmembrane</keyword>
<keyword id="KW-1133">Transmembrane helix</keyword>
<evidence type="ECO:0000255" key="1">
    <source>
        <dbReference type="HAMAP-Rule" id="MF_01502"/>
    </source>
</evidence>
<evidence type="ECO:0000305" key="2"/>
<reference key="1">
    <citation type="journal article" date="2003" name="Nature">
        <title>Genome sequence of Bacillus cereus and comparative analysis with Bacillus anthracis.</title>
        <authorList>
            <person name="Ivanova N."/>
            <person name="Sorokin A."/>
            <person name="Anderson I."/>
            <person name="Galleron N."/>
            <person name="Candelon B."/>
            <person name="Kapatral V."/>
            <person name="Bhattacharyya A."/>
            <person name="Reznik G."/>
            <person name="Mikhailova N."/>
            <person name="Lapidus A."/>
            <person name="Chu L."/>
            <person name="Mazur M."/>
            <person name="Goltsman E."/>
            <person name="Larsen N."/>
            <person name="D'Souza M."/>
            <person name="Walunas T."/>
            <person name="Grechkin Y."/>
            <person name="Pusch G."/>
            <person name="Haselkorn R."/>
            <person name="Fonstein M."/>
            <person name="Ehrlich S.D."/>
            <person name="Overbeek R."/>
            <person name="Kyrpides N.C."/>
        </authorList>
    </citation>
    <scope>NUCLEOTIDE SEQUENCE [LARGE SCALE GENOMIC DNA]</scope>
    <source>
        <strain>ATCC 14579 / DSM 31 / CCUG 7414 / JCM 2152 / NBRC 15305 / NCIMB 9373 / NCTC 2599 / NRRL B-3711</strain>
    </source>
</reference>
<dbReference type="EMBL" id="AE016877">
    <property type="protein sequence ID" value="AAP07558.1"/>
    <property type="status" value="ALT_INIT"/>
    <property type="molecule type" value="Genomic_DNA"/>
</dbReference>
<dbReference type="RefSeq" id="NP_830357.1">
    <property type="nucleotide sequence ID" value="NC_004722.1"/>
</dbReference>
<dbReference type="RefSeq" id="WP_000025058.1">
    <property type="nucleotide sequence ID" value="NZ_CP138336.1"/>
</dbReference>
<dbReference type="SMR" id="Q81I77"/>
<dbReference type="STRING" id="226900.BC_0520"/>
<dbReference type="KEGG" id="bce:BC0520"/>
<dbReference type="PATRIC" id="fig|226900.8.peg.494"/>
<dbReference type="HOGENOM" id="CLU_143991_0_0_9"/>
<dbReference type="OrthoDB" id="1653848at2"/>
<dbReference type="Proteomes" id="UP000001417">
    <property type="component" value="Chromosome"/>
</dbReference>
<dbReference type="GO" id="GO:0005886">
    <property type="term" value="C:plasma membrane"/>
    <property type="evidence" value="ECO:0007669"/>
    <property type="project" value="UniProtKB-SubCell"/>
</dbReference>
<dbReference type="HAMAP" id="MF_01502">
    <property type="entry name" value="UPF0295"/>
    <property type="match status" value="1"/>
</dbReference>
<dbReference type="InterPro" id="IPR020912">
    <property type="entry name" value="UPF0295"/>
</dbReference>
<dbReference type="NCBIfam" id="NF002796">
    <property type="entry name" value="PRK02935.1"/>
    <property type="match status" value="1"/>
</dbReference>
<dbReference type="Pfam" id="PF11023">
    <property type="entry name" value="DUF2614"/>
    <property type="match status" value="1"/>
</dbReference>
<feature type="chain" id="PRO_0000053849" description="UPF0295 protein BC_0520">
    <location>
        <begin position="1"/>
        <end position="118"/>
    </location>
</feature>
<feature type="transmembrane region" description="Helical" evidence="1">
    <location>
        <begin position="12"/>
        <end position="32"/>
    </location>
</feature>
<feature type="transmembrane region" description="Helical" evidence="1">
    <location>
        <begin position="43"/>
        <end position="63"/>
    </location>
</feature>